<protein>
    <recommendedName>
        <fullName evidence="1">Ribonuclease 3</fullName>
        <ecNumber evidence="1">3.1.26.3</ecNumber>
    </recommendedName>
    <alternativeName>
        <fullName evidence="1">Ribonuclease III</fullName>
        <shortName evidence="1">RNase III</shortName>
    </alternativeName>
</protein>
<name>RNC_PSYIN</name>
<organism>
    <name type="scientific">Psychromonas ingrahamii (strain DSM 17664 / CCUG 51855 / 37)</name>
    <dbReference type="NCBI Taxonomy" id="357804"/>
    <lineage>
        <taxon>Bacteria</taxon>
        <taxon>Pseudomonadati</taxon>
        <taxon>Pseudomonadota</taxon>
        <taxon>Gammaproteobacteria</taxon>
        <taxon>Alteromonadales</taxon>
        <taxon>Psychromonadaceae</taxon>
        <taxon>Psychromonas</taxon>
    </lineage>
</organism>
<comment type="function">
    <text evidence="1">Digests double-stranded RNA. Involved in the processing of primary rRNA transcript to yield the immediate precursors to the large and small rRNAs (23S and 16S). Processes some mRNAs, and tRNAs when they are encoded in the rRNA operon. Processes pre-crRNA and tracrRNA of type II CRISPR loci if present in the organism.</text>
</comment>
<comment type="catalytic activity">
    <reaction evidence="1">
        <text>Endonucleolytic cleavage to 5'-phosphomonoester.</text>
        <dbReference type="EC" id="3.1.26.3"/>
    </reaction>
</comment>
<comment type="cofactor">
    <cofactor evidence="1">
        <name>Mg(2+)</name>
        <dbReference type="ChEBI" id="CHEBI:18420"/>
    </cofactor>
</comment>
<comment type="subunit">
    <text evidence="1">Homodimer.</text>
</comment>
<comment type="subcellular location">
    <subcellularLocation>
        <location evidence="1">Cytoplasm</location>
    </subcellularLocation>
</comment>
<comment type="similarity">
    <text evidence="1">Belongs to the ribonuclease III family.</text>
</comment>
<proteinExistence type="inferred from homology"/>
<reference key="1">
    <citation type="journal article" date="2008" name="BMC Genomics">
        <title>Genomics of an extreme psychrophile, Psychromonas ingrahamii.</title>
        <authorList>
            <person name="Riley M."/>
            <person name="Staley J.T."/>
            <person name="Danchin A."/>
            <person name="Wang T.Z."/>
            <person name="Brettin T.S."/>
            <person name="Hauser L.J."/>
            <person name="Land M.L."/>
            <person name="Thompson L.S."/>
        </authorList>
    </citation>
    <scope>NUCLEOTIDE SEQUENCE [LARGE SCALE GENOMIC DNA]</scope>
    <source>
        <strain>DSM 17664 / CCUG 51855 / 37</strain>
    </source>
</reference>
<feature type="chain" id="PRO_1000075792" description="Ribonuclease 3">
    <location>
        <begin position="1"/>
        <end position="228"/>
    </location>
</feature>
<feature type="domain" description="RNase III" evidence="1">
    <location>
        <begin position="8"/>
        <end position="130"/>
    </location>
</feature>
<feature type="domain" description="DRBM" evidence="1">
    <location>
        <begin position="157"/>
        <end position="226"/>
    </location>
</feature>
<feature type="active site" evidence="1">
    <location>
        <position position="47"/>
    </location>
</feature>
<feature type="active site" evidence="1">
    <location>
        <position position="119"/>
    </location>
</feature>
<feature type="binding site" evidence="1">
    <location>
        <position position="43"/>
    </location>
    <ligand>
        <name>Mg(2+)</name>
        <dbReference type="ChEBI" id="CHEBI:18420"/>
    </ligand>
</feature>
<feature type="binding site" evidence="1">
    <location>
        <position position="116"/>
    </location>
    <ligand>
        <name>Mg(2+)</name>
        <dbReference type="ChEBI" id="CHEBI:18420"/>
    </ligand>
</feature>
<feature type="binding site" evidence="1">
    <location>
        <position position="119"/>
    </location>
    <ligand>
        <name>Mg(2+)</name>
        <dbReference type="ChEBI" id="CHEBI:18420"/>
    </ligand>
</feature>
<gene>
    <name evidence="1" type="primary">rnc</name>
    <name type="ordered locus">Ping_0640</name>
</gene>
<dbReference type="EC" id="3.1.26.3" evidence="1"/>
<dbReference type="EMBL" id="CP000510">
    <property type="protein sequence ID" value="ABM02493.1"/>
    <property type="molecule type" value="Genomic_DNA"/>
</dbReference>
<dbReference type="RefSeq" id="WP_011769052.1">
    <property type="nucleotide sequence ID" value="NC_008709.1"/>
</dbReference>
<dbReference type="SMR" id="A1SSM8"/>
<dbReference type="STRING" id="357804.Ping_0640"/>
<dbReference type="KEGG" id="pin:Ping_0640"/>
<dbReference type="eggNOG" id="COG0571">
    <property type="taxonomic scope" value="Bacteria"/>
</dbReference>
<dbReference type="HOGENOM" id="CLU_000907_1_1_6"/>
<dbReference type="OrthoDB" id="9805026at2"/>
<dbReference type="Proteomes" id="UP000000639">
    <property type="component" value="Chromosome"/>
</dbReference>
<dbReference type="GO" id="GO:0005737">
    <property type="term" value="C:cytoplasm"/>
    <property type="evidence" value="ECO:0007669"/>
    <property type="project" value="UniProtKB-SubCell"/>
</dbReference>
<dbReference type="GO" id="GO:0003725">
    <property type="term" value="F:double-stranded RNA binding"/>
    <property type="evidence" value="ECO:0007669"/>
    <property type="project" value="TreeGrafter"/>
</dbReference>
<dbReference type="GO" id="GO:0046872">
    <property type="term" value="F:metal ion binding"/>
    <property type="evidence" value="ECO:0007669"/>
    <property type="project" value="UniProtKB-KW"/>
</dbReference>
<dbReference type="GO" id="GO:0004525">
    <property type="term" value="F:ribonuclease III activity"/>
    <property type="evidence" value="ECO:0007669"/>
    <property type="project" value="UniProtKB-UniRule"/>
</dbReference>
<dbReference type="GO" id="GO:0019843">
    <property type="term" value="F:rRNA binding"/>
    <property type="evidence" value="ECO:0007669"/>
    <property type="project" value="UniProtKB-KW"/>
</dbReference>
<dbReference type="GO" id="GO:0006397">
    <property type="term" value="P:mRNA processing"/>
    <property type="evidence" value="ECO:0007669"/>
    <property type="project" value="UniProtKB-UniRule"/>
</dbReference>
<dbReference type="GO" id="GO:0010468">
    <property type="term" value="P:regulation of gene expression"/>
    <property type="evidence" value="ECO:0007669"/>
    <property type="project" value="TreeGrafter"/>
</dbReference>
<dbReference type="GO" id="GO:0006364">
    <property type="term" value="P:rRNA processing"/>
    <property type="evidence" value="ECO:0007669"/>
    <property type="project" value="UniProtKB-UniRule"/>
</dbReference>
<dbReference type="GO" id="GO:0008033">
    <property type="term" value="P:tRNA processing"/>
    <property type="evidence" value="ECO:0007669"/>
    <property type="project" value="UniProtKB-KW"/>
</dbReference>
<dbReference type="CDD" id="cd10845">
    <property type="entry name" value="DSRM_RNAse_III_family"/>
    <property type="match status" value="1"/>
</dbReference>
<dbReference type="CDD" id="cd00593">
    <property type="entry name" value="RIBOc"/>
    <property type="match status" value="1"/>
</dbReference>
<dbReference type="FunFam" id="1.10.1520.10:FF:000001">
    <property type="entry name" value="Ribonuclease 3"/>
    <property type="match status" value="1"/>
</dbReference>
<dbReference type="FunFam" id="3.30.160.20:FF:000003">
    <property type="entry name" value="Ribonuclease 3"/>
    <property type="match status" value="1"/>
</dbReference>
<dbReference type="Gene3D" id="3.30.160.20">
    <property type="match status" value="1"/>
</dbReference>
<dbReference type="Gene3D" id="1.10.1520.10">
    <property type="entry name" value="Ribonuclease III domain"/>
    <property type="match status" value="1"/>
</dbReference>
<dbReference type="HAMAP" id="MF_00104">
    <property type="entry name" value="RNase_III"/>
    <property type="match status" value="1"/>
</dbReference>
<dbReference type="InterPro" id="IPR014720">
    <property type="entry name" value="dsRBD_dom"/>
</dbReference>
<dbReference type="InterPro" id="IPR011907">
    <property type="entry name" value="RNase_III"/>
</dbReference>
<dbReference type="InterPro" id="IPR000999">
    <property type="entry name" value="RNase_III_dom"/>
</dbReference>
<dbReference type="InterPro" id="IPR036389">
    <property type="entry name" value="RNase_III_sf"/>
</dbReference>
<dbReference type="NCBIfam" id="TIGR02191">
    <property type="entry name" value="RNaseIII"/>
    <property type="match status" value="1"/>
</dbReference>
<dbReference type="PANTHER" id="PTHR11207:SF0">
    <property type="entry name" value="RIBONUCLEASE 3"/>
    <property type="match status" value="1"/>
</dbReference>
<dbReference type="PANTHER" id="PTHR11207">
    <property type="entry name" value="RIBONUCLEASE III"/>
    <property type="match status" value="1"/>
</dbReference>
<dbReference type="Pfam" id="PF00035">
    <property type="entry name" value="dsrm"/>
    <property type="match status" value="1"/>
</dbReference>
<dbReference type="Pfam" id="PF14622">
    <property type="entry name" value="Ribonucleas_3_3"/>
    <property type="match status" value="1"/>
</dbReference>
<dbReference type="SMART" id="SM00358">
    <property type="entry name" value="DSRM"/>
    <property type="match status" value="1"/>
</dbReference>
<dbReference type="SMART" id="SM00535">
    <property type="entry name" value="RIBOc"/>
    <property type="match status" value="1"/>
</dbReference>
<dbReference type="SUPFAM" id="SSF54768">
    <property type="entry name" value="dsRNA-binding domain-like"/>
    <property type="match status" value="1"/>
</dbReference>
<dbReference type="SUPFAM" id="SSF69065">
    <property type="entry name" value="RNase III domain-like"/>
    <property type="match status" value="1"/>
</dbReference>
<dbReference type="PROSITE" id="PS50137">
    <property type="entry name" value="DS_RBD"/>
    <property type="match status" value="1"/>
</dbReference>
<dbReference type="PROSITE" id="PS00517">
    <property type="entry name" value="RNASE_3_1"/>
    <property type="match status" value="1"/>
</dbReference>
<dbReference type="PROSITE" id="PS50142">
    <property type="entry name" value="RNASE_3_2"/>
    <property type="match status" value="1"/>
</dbReference>
<sequence length="228" mass="25516">MMIKQAELKRLERRVDYTFSDFSLLQQALTHRSALGNHNERLEFLGDSILSYAISTDLYARFPKVDEGDLSRMRATLVCGKMLAEIGREFQLGDCLILGPGELKSGGFRRDSIIADGVEAIIGAAFLDSDIDTVKKLILKWFDSRLNTIEPGISQKDPKTRLQEHLQSRKQPLPIYEVLEIKGEAHNQRFTMSCSIDGLKSVQGQGTSRRKAEQIAANKMLDSLSGAK</sequence>
<accession>A1SSM8</accession>
<keyword id="KW-0963">Cytoplasm</keyword>
<keyword id="KW-0255">Endonuclease</keyword>
<keyword id="KW-0378">Hydrolase</keyword>
<keyword id="KW-0460">Magnesium</keyword>
<keyword id="KW-0479">Metal-binding</keyword>
<keyword id="KW-0507">mRNA processing</keyword>
<keyword id="KW-0540">Nuclease</keyword>
<keyword id="KW-1185">Reference proteome</keyword>
<keyword id="KW-0694">RNA-binding</keyword>
<keyword id="KW-0698">rRNA processing</keyword>
<keyword id="KW-0699">rRNA-binding</keyword>
<keyword id="KW-0819">tRNA processing</keyword>
<evidence type="ECO:0000255" key="1">
    <source>
        <dbReference type="HAMAP-Rule" id="MF_00104"/>
    </source>
</evidence>